<name>FLUC_BURM7</name>
<keyword id="KW-0997">Cell inner membrane</keyword>
<keyword id="KW-1003">Cell membrane</keyword>
<keyword id="KW-0407">Ion channel</keyword>
<keyword id="KW-0406">Ion transport</keyword>
<keyword id="KW-0472">Membrane</keyword>
<keyword id="KW-0479">Metal-binding</keyword>
<keyword id="KW-0915">Sodium</keyword>
<keyword id="KW-0812">Transmembrane</keyword>
<keyword id="KW-1133">Transmembrane helix</keyword>
<keyword id="KW-0813">Transport</keyword>
<proteinExistence type="inferred from homology"/>
<feature type="chain" id="PRO_1000026371" description="Fluoride-specific ion channel FluC">
    <location>
        <begin position="1"/>
        <end position="128"/>
    </location>
</feature>
<feature type="transmembrane region" description="Helical" evidence="1">
    <location>
        <begin position="5"/>
        <end position="25"/>
    </location>
</feature>
<feature type="transmembrane region" description="Helical" evidence="1">
    <location>
        <begin position="35"/>
        <end position="55"/>
    </location>
</feature>
<feature type="transmembrane region" description="Helical" evidence="1">
    <location>
        <begin position="67"/>
        <end position="87"/>
    </location>
</feature>
<feature type="transmembrane region" description="Helical" evidence="1">
    <location>
        <begin position="96"/>
        <end position="116"/>
    </location>
</feature>
<feature type="binding site" evidence="1">
    <location>
        <position position="75"/>
    </location>
    <ligand>
        <name>Na(+)</name>
        <dbReference type="ChEBI" id="CHEBI:29101"/>
        <note>structural</note>
    </ligand>
</feature>
<feature type="binding site" evidence="1">
    <location>
        <position position="78"/>
    </location>
    <ligand>
        <name>Na(+)</name>
        <dbReference type="ChEBI" id="CHEBI:29101"/>
        <note>structural</note>
    </ligand>
</feature>
<reference key="1">
    <citation type="journal article" date="2010" name="Genome Biol. Evol.">
        <title>Continuing evolution of Burkholderia mallei through genome reduction and large-scale rearrangements.</title>
        <authorList>
            <person name="Losada L."/>
            <person name="Ronning C.M."/>
            <person name="DeShazer D."/>
            <person name="Woods D."/>
            <person name="Fedorova N."/>
            <person name="Kim H.S."/>
            <person name="Shabalina S.A."/>
            <person name="Pearson T.R."/>
            <person name="Brinkac L."/>
            <person name="Tan P."/>
            <person name="Nandi T."/>
            <person name="Crabtree J."/>
            <person name="Badger J."/>
            <person name="Beckstrom-Sternberg S."/>
            <person name="Saqib M."/>
            <person name="Schutzer S.E."/>
            <person name="Keim P."/>
            <person name="Nierman W.C."/>
        </authorList>
    </citation>
    <scope>NUCLEOTIDE SEQUENCE [LARGE SCALE GENOMIC DNA]</scope>
    <source>
        <strain>NCTC 10247</strain>
    </source>
</reference>
<organism>
    <name type="scientific">Burkholderia mallei (strain NCTC 10247)</name>
    <dbReference type="NCBI Taxonomy" id="320389"/>
    <lineage>
        <taxon>Bacteria</taxon>
        <taxon>Pseudomonadati</taxon>
        <taxon>Pseudomonadota</taxon>
        <taxon>Betaproteobacteria</taxon>
        <taxon>Burkholderiales</taxon>
        <taxon>Burkholderiaceae</taxon>
        <taxon>Burkholderia</taxon>
        <taxon>pseudomallei group</taxon>
    </lineage>
</organism>
<sequence length="128" mass="13522">MFYSIVAIFVGAGFGALLRWFLSIGLNALLPEVPLGTLASNLIGGYLIGIAVVAFATRAGLPPEWRLFVITGFMGGLTTFSTYSVEVMTHAVQGEFGWALAVAALHLIGSFTLTGLGMWTARAWLAPA</sequence>
<evidence type="ECO:0000255" key="1">
    <source>
        <dbReference type="HAMAP-Rule" id="MF_00454"/>
    </source>
</evidence>
<dbReference type="EMBL" id="CP000548">
    <property type="protein sequence ID" value="ABO05040.1"/>
    <property type="molecule type" value="Genomic_DNA"/>
</dbReference>
<dbReference type="RefSeq" id="WP_004186560.1">
    <property type="nucleotide sequence ID" value="NZ_CP007802.1"/>
</dbReference>
<dbReference type="SMR" id="A3MMS6"/>
<dbReference type="GeneID" id="92979864"/>
<dbReference type="KEGG" id="bmaz:BM44_1194"/>
<dbReference type="KEGG" id="bmn:BMA10247_2030"/>
<dbReference type="PATRIC" id="fig|320389.8.peg.1333"/>
<dbReference type="GO" id="GO:0005886">
    <property type="term" value="C:plasma membrane"/>
    <property type="evidence" value="ECO:0007669"/>
    <property type="project" value="UniProtKB-SubCell"/>
</dbReference>
<dbReference type="GO" id="GO:0062054">
    <property type="term" value="F:fluoride channel activity"/>
    <property type="evidence" value="ECO:0007669"/>
    <property type="project" value="UniProtKB-UniRule"/>
</dbReference>
<dbReference type="GO" id="GO:0046872">
    <property type="term" value="F:metal ion binding"/>
    <property type="evidence" value="ECO:0007669"/>
    <property type="project" value="UniProtKB-KW"/>
</dbReference>
<dbReference type="GO" id="GO:0140114">
    <property type="term" value="P:cellular detoxification of fluoride"/>
    <property type="evidence" value="ECO:0007669"/>
    <property type="project" value="UniProtKB-UniRule"/>
</dbReference>
<dbReference type="HAMAP" id="MF_00454">
    <property type="entry name" value="FluC"/>
    <property type="match status" value="1"/>
</dbReference>
<dbReference type="InterPro" id="IPR003691">
    <property type="entry name" value="FluC"/>
</dbReference>
<dbReference type="NCBIfam" id="TIGR00494">
    <property type="entry name" value="crcB"/>
    <property type="match status" value="1"/>
</dbReference>
<dbReference type="NCBIfam" id="NF010792">
    <property type="entry name" value="PRK14196.1"/>
    <property type="match status" value="1"/>
</dbReference>
<dbReference type="PANTHER" id="PTHR28259">
    <property type="entry name" value="FLUORIDE EXPORT PROTEIN 1-RELATED"/>
    <property type="match status" value="1"/>
</dbReference>
<dbReference type="PANTHER" id="PTHR28259:SF1">
    <property type="entry name" value="FLUORIDE EXPORT PROTEIN 1-RELATED"/>
    <property type="match status" value="1"/>
</dbReference>
<dbReference type="Pfam" id="PF02537">
    <property type="entry name" value="CRCB"/>
    <property type="match status" value="1"/>
</dbReference>
<protein>
    <recommendedName>
        <fullName evidence="1">Fluoride-specific ion channel FluC</fullName>
    </recommendedName>
</protein>
<comment type="function">
    <text evidence="1">Fluoride-specific ion channel. Important for reducing fluoride concentration in the cell, thus reducing its toxicity.</text>
</comment>
<comment type="catalytic activity">
    <reaction evidence="1">
        <text>fluoride(in) = fluoride(out)</text>
        <dbReference type="Rhea" id="RHEA:76159"/>
        <dbReference type="ChEBI" id="CHEBI:17051"/>
    </reaction>
    <physiologicalReaction direction="left-to-right" evidence="1">
        <dbReference type="Rhea" id="RHEA:76160"/>
    </physiologicalReaction>
</comment>
<comment type="activity regulation">
    <text evidence="1">Na(+) is not transported, but it plays an essential structural role and its presence is essential for fluoride channel function.</text>
</comment>
<comment type="subcellular location">
    <subcellularLocation>
        <location evidence="1">Cell inner membrane</location>
        <topology evidence="1">Multi-pass membrane protein</topology>
    </subcellularLocation>
</comment>
<comment type="similarity">
    <text evidence="1">Belongs to the fluoride channel Fluc/FEX (TC 1.A.43) family.</text>
</comment>
<accession>A3MMS6</accession>
<gene>
    <name evidence="1" type="primary">fluC</name>
    <name evidence="1" type="synonym">crcB</name>
    <name type="ordered locus">BMA10247_2030</name>
</gene>